<sequence length="598" mass="66605">MSESNKAIRQPIISVLGHVDHGKTTLLDKIRGTAVAAKEAGGITQHIGASEIPLEVVKEICGPLLEQLDVEITIPGLLFIDTPGHEAFTNLRRRGGALADIAILVIDIMEGVMPQTEEALRILRRYRTPFVVAANKVDRVPGWKSHEDTPFLESFQKQSPEVQQRLEEKVYELIGQLHQHGFQAERFDRVRDFTRTVAIVPTSGVTGEGIPELLMVVTGLAQRFLEEQLKIEVEGPGKAAILEVKEEPGLGHTVDAILYDGIIRTGDTIVIGHPEEPIVTRVRSLLKPKPLDEMRDPSDRFRKVDEVTAAAGVKISAPELEEAVAGAPLRVVGEDEDVEEVVREVQEEVEEVTIETDQEGIIIKADTLGTLEAVVGEFKEKDVPIRKADVGDITKKDVIEAHAVAEKDPLLGVIVGFNVGVTEEARELADEYDVDIIIDDVIYELVEKYEEMVEKRIERERRKRLDELVRPGKIKVLPGYIFRQSKPAIVGVQVLAGVIKPGYPLMREDGRELGEIKQIQMHGEPIKEAKKGQEVAISIEGPIVGRHFEEGDILYTDVPSEHAKLMFEEFKDLLTEDELEALKEIAEIKRKEDPFYGM</sequence>
<accession>Q8TV06</accession>
<name>IF2P_METKA</name>
<keyword id="KW-0342">GTP-binding</keyword>
<keyword id="KW-0396">Initiation factor</keyword>
<keyword id="KW-0547">Nucleotide-binding</keyword>
<keyword id="KW-0648">Protein biosynthesis</keyword>
<keyword id="KW-1185">Reference proteome</keyword>
<reference key="1">
    <citation type="journal article" date="2002" name="Proc. Natl. Acad. Sci. U.S.A.">
        <title>The complete genome of hyperthermophile Methanopyrus kandleri AV19 and monophyly of archaeal methanogens.</title>
        <authorList>
            <person name="Slesarev A.I."/>
            <person name="Mezhevaya K.V."/>
            <person name="Makarova K.S."/>
            <person name="Polushin N.N."/>
            <person name="Shcherbinina O.V."/>
            <person name="Shakhova V.V."/>
            <person name="Belova G.I."/>
            <person name="Aravind L."/>
            <person name="Natale D.A."/>
            <person name="Rogozin I.B."/>
            <person name="Tatusov R.L."/>
            <person name="Wolf Y.I."/>
            <person name="Stetter K.O."/>
            <person name="Malykh A.G."/>
            <person name="Koonin E.V."/>
            <person name="Kozyavkin S.A."/>
        </authorList>
    </citation>
    <scope>NUCLEOTIDE SEQUENCE [LARGE SCALE GENOMIC DNA]</scope>
    <source>
        <strain>AV19 / DSM 6324 / JCM 9639 / NBRC 100938</strain>
    </source>
</reference>
<feature type="chain" id="PRO_0000137302" description="Probable translation initiation factor IF-2">
    <location>
        <begin position="1"/>
        <end position="598"/>
    </location>
</feature>
<feature type="domain" description="tr-type G">
    <location>
        <begin position="8"/>
        <end position="226"/>
    </location>
</feature>
<feature type="region of interest" description="G1" evidence="1">
    <location>
        <begin position="17"/>
        <end position="24"/>
    </location>
</feature>
<feature type="region of interest" description="G2" evidence="1">
    <location>
        <begin position="42"/>
        <end position="46"/>
    </location>
</feature>
<feature type="region of interest" description="G3" evidence="1">
    <location>
        <begin position="81"/>
        <end position="84"/>
    </location>
</feature>
<feature type="region of interest" description="G4" evidence="1">
    <location>
        <begin position="135"/>
        <end position="138"/>
    </location>
</feature>
<feature type="region of interest" description="G5" evidence="1">
    <location>
        <begin position="203"/>
        <end position="205"/>
    </location>
</feature>
<feature type="binding site" evidence="2">
    <location>
        <begin position="17"/>
        <end position="24"/>
    </location>
    <ligand>
        <name>GTP</name>
        <dbReference type="ChEBI" id="CHEBI:37565"/>
    </ligand>
</feature>
<feature type="binding site" evidence="2">
    <location>
        <begin position="81"/>
        <end position="85"/>
    </location>
    <ligand>
        <name>GTP</name>
        <dbReference type="ChEBI" id="CHEBI:37565"/>
    </ligand>
</feature>
<feature type="binding site" evidence="2">
    <location>
        <begin position="135"/>
        <end position="138"/>
    </location>
    <ligand>
        <name>GTP</name>
        <dbReference type="ChEBI" id="CHEBI:37565"/>
    </ligand>
</feature>
<organism>
    <name type="scientific">Methanopyrus kandleri (strain AV19 / DSM 6324 / JCM 9639 / NBRC 100938)</name>
    <dbReference type="NCBI Taxonomy" id="190192"/>
    <lineage>
        <taxon>Archaea</taxon>
        <taxon>Methanobacteriati</taxon>
        <taxon>Methanobacteriota</taxon>
        <taxon>Methanomada group</taxon>
        <taxon>Methanopyri</taxon>
        <taxon>Methanopyrales</taxon>
        <taxon>Methanopyraceae</taxon>
        <taxon>Methanopyrus</taxon>
    </lineage>
</organism>
<proteinExistence type="inferred from homology"/>
<comment type="function">
    <text evidence="2">Function in general translation initiation by promoting the binding of the formylmethionine-tRNA to ribosomes. Seems to function along with eIF-2.</text>
</comment>
<comment type="similarity">
    <text evidence="2">Belongs to the TRAFAC class translation factor GTPase superfamily. Classic translation factor GTPase family. IF-2 subfamily.</text>
</comment>
<gene>
    <name evidence="2" type="primary">infB</name>
    <name type="ordered locus">MK1595</name>
</gene>
<evidence type="ECO:0000250" key="1"/>
<evidence type="ECO:0000255" key="2">
    <source>
        <dbReference type="HAMAP-Rule" id="MF_00100"/>
    </source>
</evidence>
<protein>
    <recommendedName>
        <fullName evidence="2">Probable translation initiation factor IF-2</fullName>
    </recommendedName>
</protein>
<dbReference type="EMBL" id="AE009439">
    <property type="protein sequence ID" value="AAM02808.1"/>
    <property type="molecule type" value="Genomic_DNA"/>
</dbReference>
<dbReference type="RefSeq" id="WP_011019963.1">
    <property type="nucleotide sequence ID" value="NC_003551.1"/>
</dbReference>
<dbReference type="SMR" id="Q8TV06"/>
<dbReference type="STRING" id="190192.MK1595"/>
<dbReference type="PaxDb" id="190192-MK1595"/>
<dbReference type="EnsemblBacteria" id="AAM02808">
    <property type="protein sequence ID" value="AAM02808"/>
    <property type="gene ID" value="MK1595"/>
</dbReference>
<dbReference type="GeneID" id="1478190"/>
<dbReference type="KEGG" id="mka:MK1595"/>
<dbReference type="PATRIC" id="fig|190192.8.peg.1756"/>
<dbReference type="HOGENOM" id="CLU_002656_3_3_2"/>
<dbReference type="InParanoid" id="Q8TV06"/>
<dbReference type="OrthoDB" id="30957at2157"/>
<dbReference type="Proteomes" id="UP000001826">
    <property type="component" value="Chromosome"/>
</dbReference>
<dbReference type="GO" id="GO:0005737">
    <property type="term" value="C:cytoplasm"/>
    <property type="evidence" value="ECO:0007669"/>
    <property type="project" value="TreeGrafter"/>
</dbReference>
<dbReference type="GO" id="GO:0005525">
    <property type="term" value="F:GTP binding"/>
    <property type="evidence" value="ECO:0007669"/>
    <property type="project" value="UniProtKB-KW"/>
</dbReference>
<dbReference type="GO" id="GO:0003924">
    <property type="term" value="F:GTPase activity"/>
    <property type="evidence" value="ECO:0007669"/>
    <property type="project" value="UniProtKB-UniRule"/>
</dbReference>
<dbReference type="GO" id="GO:0003743">
    <property type="term" value="F:translation initiation factor activity"/>
    <property type="evidence" value="ECO:0007669"/>
    <property type="project" value="UniProtKB-UniRule"/>
</dbReference>
<dbReference type="CDD" id="cd03703">
    <property type="entry name" value="aeIF5B_II"/>
    <property type="match status" value="1"/>
</dbReference>
<dbReference type="CDD" id="cd16266">
    <property type="entry name" value="IF2_aeIF5B_IV"/>
    <property type="match status" value="1"/>
</dbReference>
<dbReference type="CDD" id="cd01887">
    <property type="entry name" value="IF2_eIF5B"/>
    <property type="match status" value="1"/>
</dbReference>
<dbReference type="FunFam" id="3.40.50.300:FF:000112">
    <property type="entry name" value="Eukaryotic translation initiation factor 5B"/>
    <property type="match status" value="1"/>
</dbReference>
<dbReference type="FunFam" id="2.40.30.10:FF:000013">
    <property type="entry name" value="eukaryotic translation initiation factor 5B"/>
    <property type="match status" value="1"/>
</dbReference>
<dbReference type="FunFam" id="3.40.50.10050:FF:000001">
    <property type="entry name" value="Translation initiation factor IF-2"/>
    <property type="match status" value="1"/>
</dbReference>
<dbReference type="Gene3D" id="3.40.50.300">
    <property type="entry name" value="P-loop containing nucleotide triphosphate hydrolases"/>
    <property type="match status" value="1"/>
</dbReference>
<dbReference type="Gene3D" id="2.40.30.10">
    <property type="entry name" value="Translation factors"/>
    <property type="match status" value="2"/>
</dbReference>
<dbReference type="Gene3D" id="3.40.50.10050">
    <property type="entry name" value="Translation initiation factor IF- 2, domain 3"/>
    <property type="match status" value="1"/>
</dbReference>
<dbReference type="HAMAP" id="MF_00100_A">
    <property type="entry name" value="IF_2_A"/>
    <property type="match status" value="1"/>
</dbReference>
<dbReference type="InterPro" id="IPR004161">
    <property type="entry name" value="EFTu-like_2"/>
</dbReference>
<dbReference type="InterPro" id="IPR029459">
    <property type="entry name" value="EFTU-type"/>
</dbReference>
<dbReference type="InterPro" id="IPR027417">
    <property type="entry name" value="P-loop_NTPase"/>
</dbReference>
<dbReference type="InterPro" id="IPR005225">
    <property type="entry name" value="Small_GTP-bd"/>
</dbReference>
<dbReference type="InterPro" id="IPR000795">
    <property type="entry name" value="T_Tr_GTP-bd_dom"/>
</dbReference>
<dbReference type="InterPro" id="IPR004544">
    <property type="entry name" value="TF_aIF-2_arc"/>
</dbReference>
<dbReference type="InterPro" id="IPR015760">
    <property type="entry name" value="TIF_IF2"/>
</dbReference>
<dbReference type="InterPro" id="IPR023115">
    <property type="entry name" value="TIF_IF2_dom3"/>
</dbReference>
<dbReference type="InterPro" id="IPR036925">
    <property type="entry name" value="TIF_IF2_dom3_sf"/>
</dbReference>
<dbReference type="InterPro" id="IPR009000">
    <property type="entry name" value="Transl_B-barrel_sf"/>
</dbReference>
<dbReference type="NCBIfam" id="TIGR00491">
    <property type="entry name" value="aIF-2"/>
    <property type="match status" value="1"/>
</dbReference>
<dbReference type="NCBIfam" id="NF003078">
    <property type="entry name" value="PRK04004.1"/>
    <property type="match status" value="1"/>
</dbReference>
<dbReference type="NCBIfam" id="NF011418">
    <property type="entry name" value="PRK14845.1"/>
    <property type="match status" value="1"/>
</dbReference>
<dbReference type="NCBIfam" id="TIGR00231">
    <property type="entry name" value="small_GTP"/>
    <property type="match status" value="1"/>
</dbReference>
<dbReference type="PANTHER" id="PTHR43381:SF4">
    <property type="entry name" value="EUKARYOTIC TRANSLATION INITIATION FACTOR 5B"/>
    <property type="match status" value="1"/>
</dbReference>
<dbReference type="PANTHER" id="PTHR43381">
    <property type="entry name" value="TRANSLATION INITIATION FACTOR IF-2-RELATED"/>
    <property type="match status" value="1"/>
</dbReference>
<dbReference type="Pfam" id="PF00009">
    <property type="entry name" value="GTP_EFTU"/>
    <property type="match status" value="1"/>
</dbReference>
<dbReference type="Pfam" id="PF03144">
    <property type="entry name" value="GTP_EFTU_D2"/>
    <property type="match status" value="1"/>
</dbReference>
<dbReference type="Pfam" id="PF14578">
    <property type="entry name" value="GTP_EFTU_D4"/>
    <property type="match status" value="1"/>
</dbReference>
<dbReference type="Pfam" id="PF11987">
    <property type="entry name" value="IF-2"/>
    <property type="match status" value="1"/>
</dbReference>
<dbReference type="PRINTS" id="PR00315">
    <property type="entry name" value="ELONGATNFCT"/>
</dbReference>
<dbReference type="SUPFAM" id="SSF52156">
    <property type="entry name" value="Initiation factor IF2/eIF5b, domain 3"/>
    <property type="match status" value="1"/>
</dbReference>
<dbReference type="SUPFAM" id="SSF52540">
    <property type="entry name" value="P-loop containing nucleoside triphosphate hydrolases"/>
    <property type="match status" value="1"/>
</dbReference>
<dbReference type="SUPFAM" id="SSF50447">
    <property type="entry name" value="Translation proteins"/>
    <property type="match status" value="1"/>
</dbReference>
<dbReference type="PROSITE" id="PS51722">
    <property type="entry name" value="G_TR_2"/>
    <property type="match status" value="1"/>
</dbReference>